<evidence type="ECO:0000269" key="1">
    <source>
    </source>
</evidence>
<evidence type="ECO:0000269" key="2">
    <source>
    </source>
</evidence>
<evidence type="ECO:0000269" key="3">
    <source>
    </source>
</evidence>
<evidence type="ECO:0000269" key="4">
    <source>
    </source>
</evidence>
<evidence type="ECO:0000269" key="5">
    <source>
    </source>
</evidence>
<evidence type="ECO:0000269" key="6">
    <source>
    </source>
</evidence>
<evidence type="ECO:0000269" key="7">
    <source>
    </source>
</evidence>
<evidence type="ECO:0000303" key="8">
    <source>
    </source>
</evidence>
<evidence type="ECO:0000305" key="9"/>
<evidence type="ECO:0000305" key="10">
    <source>
    </source>
</evidence>
<evidence type="ECO:0000305" key="11">
    <source>
    </source>
</evidence>
<evidence type="ECO:0007829" key="12">
    <source>
        <dbReference type="PDB" id="8D8L"/>
    </source>
</evidence>
<name>RT18_YEAST</name>
<reference key="1">
    <citation type="journal article" date="1995" name="Yeast">
        <title>Sequence analysis of a 30 kb DNA segment from yeast chromosome XIV carrying a ribosomal protein gene cluster, the genes encoding a plasma membrane protein and a subunit of replication factor C, and a novel putative serine/threonine protein kinase gene.</title>
        <authorList>
            <person name="Maurer K.C.T."/>
            <person name="Urbanus J.H.M."/>
            <person name="Planta R.J."/>
        </authorList>
    </citation>
    <scope>NUCLEOTIDE SEQUENCE [GENOMIC DNA]</scope>
    <source>
        <strain>ATCC 96604 / S288c / FY1679</strain>
    </source>
</reference>
<reference key="2">
    <citation type="journal article" date="1997" name="Nature">
        <title>The nucleotide sequence of Saccharomyces cerevisiae chromosome XIV and its evolutionary implications.</title>
        <authorList>
            <person name="Philippsen P."/>
            <person name="Kleine K."/>
            <person name="Poehlmann R."/>
            <person name="Duesterhoeft A."/>
            <person name="Hamberg K."/>
            <person name="Hegemann J.H."/>
            <person name="Obermaier B."/>
            <person name="Urrestarazu L.A."/>
            <person name="Aert R."/>
            <person name="Albermann K."/>
            <person name="Altmann R."/>
            <person name="Andre B."/>
            <person name="Baladron V."/>
            <person name="Ballesta J.P.G."/>
            <person name="Becam A.-M."/>
            <person name="Beinhauer J.D."/>
            <person name="Boskovic J."/>
            <person name="Buitrago M.J."/>
            <person name="Bussereau F."/>
            <person name="Coster F."/>
            <person name="Crouzet M."/>
            <person name="D'Angelo M."/>
            <person name="Dal Pero F."/>
            <person name="De Antoni A."/>
            <person name="del Rey F."/>
            <person name="Doignon F."/>
            <person name="Domdey H."/>
            <person name="Dubois E."/>
            <person name="Fiedler T.A."/>
            <person name="Fleig U."/>
            <person name="Floeth M."/>
            <person name="Fritz C."/>
            <person name="Gaillardin C."/>
            <person name="Garcia-Cantalejo J.M."/>
            <person name="Glansdorff N."/>
            <person name="Goffeau A."/>
            <person name="Gueldener U."/>
            <person name="Herbert C.J."/>
            <person name="Heumann K."/>
            <person name="Heuss-Neitzel D."/>
            <person name="Hilbert H."/>
            <person name="Hinni K."/>
            <person name="Iraqui Houssaini I."/>
            <person name="Jacquet M."/>
            <person name="Jimenez A."/>
            <person name="Jonniaux J.-L."/>
            <person name="Karpfinger-Hartl L."/>
            <person name="Lanfranchi G."/>
            <person name="Lepingle A."/>
            <person name="Levesque H."/>
            <person name="Lyck R."/>
            <person name="Maftahi M."/>
            <person name="Mallet L."/>
            <person name="Maurer C.T.C."/>
            <person name="Messenguy F."/>
            <person name="Mewes H.-W."/>
            <person name="Moestl D."/>
            <person name="Nasr F."/>
            <person name="Nicaud J.-M."/>
            <person name="Niedenthal R.K."/>
            <person name="Pandolfo D."/>
            <person name="Pierard A."/>
            <person name="Piravandi E."/>
            <person name="Planta R.J."/>
            <person name="Pohl T.M."/>
            <person name="Purnelle B."/>
            <person name="Rebischung C."/>
            <person name="Remacha M.A."/>
            <person name="Revuelta J.L."/>
            <person name="Rinke M."/>
            <person name="Saiz J.E."/>
            <person name="Sartorello F."/>
            <person name="Scherens B."/>
            <person name="Sen-Gupta M."/>
            <person name="Soler-Mira A."/>
            <person name="Urbanus J.H.M."/>
            <person name="Valle G."/>
            <person name="Van Dyck L."/>
            <person name="Verhasselt P."/>
            <person name="Vierendeels F."/>
            <person name="Vissers S."/>
            <person name="Voet M."/>
            <person name="Volckaert G."/>
            <person name="Wach A."/>
            <person name="Wambutt R."/>
            <person name="Wedler H."/>
            <person name="Zollner A."/>
            <person name="Hani J."/>
        </authorList>
    </citation>
    <scope>NUCLEOTIDE SEQUENCE [LARGE SCALE GENOMIC DNA]</scope>
    <source>
        <strain>ATCC 204508 / S288c</strain>
    </source>
</reference>
<reference key="3">
    <citation type="journal article" date="2014" name="G3 (Bethesda)">
        <title>The reference genome sequence of Saccharomyces cerevisiae: Then and now.</title>
        <authorList>
            <person name="Engel S.R."/>
            <person name="Dietrich F.S."/>
            <person name="Fisk D.G."/>
            <person name="Binkley G."/>
            <person name="Balakrishnan R."/>
            <person name="Costanzo M.C."/>
            <person name="Dwight S.S."/>
            <person name="Hitz B.C."/>
            <person name="Karra K."/>
            <person name="Nash R.S."/>
            <person name="Weng S."/>
            <person name="Wong E.D."/>
            <person name="Lloyd P."/>
            <person name="Skrzypek M.S."/>
            <person name="Miyasato S.R."/>
            <person name="Simison M."/>
            <person name="Cherry J.M."/>
        </authorList>
    </citation>
    <scope>GENOME REANNOTATION</scope>
    <source>
        <strain>ATCC 204508 / S288c</strain>
    </source>
</reference>
<reference key="4">
    <citation type="journal article" date="2007" name="Genome Res.">
        <title>Approaching a complete repository of sequence-verified protein-encoding clones for Saccharomyces cerevisiae.</title>
        <authorList>
            <person name="Hu Y."/>
            <person name="Rolfs A."/>
            <person name="Bhullar B."/>
            <person name="Murthy T.V.S."/>
            <person name="Zhu C."/>
            <person name="Berger M.F."/>
            <person name="Camargo A.A."/>
            <person name="Kelley F."/>
            <person name="McCarron S."/>
            <person name="Jepson D."/>
            <person name="Richardson A."/>
            <person name="Raphael J."/>
            <person name="Moreira D."/>
            <person name="Taycher E."/>
            <person name="Zuo D."/>
            <person name="Mohr S."/>
            <person name="Kane M.F."/>
            <person name="Williamson J."/>
            <person name="Simpson A.J.G."/>
            <person name="Bulyk M.L."/>
            <person name="Harlow E."/>
            <person name="Marsischky G."/>
            <person name="Kolodner R.D."/>
            <person name="LaBaer J."/>
        </authorList>
    </citation>
    <scope>NUCLEOTIDE SEQUENCE [GENOMIC DNA]</scope>
    <source>
        <strain>ATCC 204508 / S288c</strain>
    </source>
</reference>
<reference key="5">
    <citation type="journal article" date="1995" name="Yeast">
        <title>Sequencing analysis of a 24.7 kb fragment of yeast chromosome XIV identifies six known genes, a new member of the hexose transporter family and ten new open reading frames.</title>
        <authorList>
            <person name="Maftahi M."/>
            <person name="Nicaud J.-M."/>
            <person name="Levesque H."/>
            <person name="Gaillardin C."/>
        </authorList>
    </citation>
    <scope>NUCLEOTIDE SEQUENCE [GENOMIC DNA] OF 1-198</scope>
    <source>
        <strain>S288c / FY1676</strain>
    </source>
</reference>
<reference key="6">
    <citation type="journal article" date="1997" name="Eur. J. Biochem.">
        <title>Identification and characterization of the genes for mitochondrial ribosomal proteins of Saccharomyces cerevisiae.</title>
        <authorList>
            <person name="Kitakawa M."/>
            <person name="Graack H.-R."/>
            <person name="Grohmann L."/>
            <person name="Goldschmidt-Reisin S."/>
            <person name="Herfurth E."/>
            <person name="Wittmann-Liebold B."/>
            <person name="Nishimura T."/>
            <person name="Isono K."/>
        </authorList>
    </citation>
    <scope>PROTEIN SEQUENCE OF 60-89</scope>
    <scope>SUBUNIT</scope>
    <source>
        <strain>07173</strain>
    </source>
</reference>
<reference key="7">
    <citation type="journal article" date="2002" name="Eur. J. Biochem.">
        <title>Tag-mediated isolation of yeast mitochondrial ribosome and mass spectrometric identification of its new components.</title>
        <authorList>
            <person name="Gan X."/>
            <person name="Kitakawa M."/>
            <person name="Yoshino K."/>
            <person name="Oshiro N."/>
            <person name="Yonezawa K."/>
            <person name="Isono K."/>
        </authorList>
    </citation>
    <scope>IDENTIFICATION IN THE MITOCHONDRIAL RIBOSOMAL SMALL COMPLEX</scope>
    <scope>IDENTIFICATION BY MASS SPECTROMETRY</scope>
</reference>
<reference key="8">
    <citation type="journal article" date="2003" name="Nature">
        <title>Global analysis of protein localization in budding yeast.</title>
        <authorList>
            <person name="Huh W.-K."/>
            <person name="Falvo J.V."/>
            <person name="Gerke L.C."/>
            <person name="Carroll A.S."/>
            <person name="Howson R.W."/>
            <person name="Weissman J.S."/>
            <person name="O'Shea E.K."/>
        </authorList>
    </citation>
    <scope>SUBCELLULAR LOCATION [LARGE SCALE ANALYSIS]</scope>
</reference>
<reference key="9">
    <citation type="journal article" date="2003" name="Nature">
        <title>Global analysis of protein expression in yeast.</title>
        <authorList>
            <person name="Ghaemmaghami S."/>
            <person name="Huh W.-K."/>
            <person name="Bower K."/>
            <person name="Howson R.W."/>
            <person name="Belle A."/>
            <person name="Dephoure N."/>
            <person name="O'Shea E.K."/>
            <person name="Weissman J.S."/>
        </authorList>
    </citation>
    <scope>LEVEL OF PROTEIN EXPRESSION [LARGE SCALE ANALYSIS]</scope>
</reference>
<reference key="10">
    <citation type="journal article" date="2003" name="Proc. Natl. Acad. Sci. U.S.A.">
        <title>The proteome of Saccharomyces cerevisiae mitochondria.</title>
        <authorList>
            <person name="Sickmann A."/>
            <person name="Reinders J."/>
            <person name="Wagner Y."/>
            <person name="Joppich C."/>
            <person name="Zahedi R.P."/>
            <person name="Meyer H.E."/>
            <person name="Schoenfisch B."/>
            <person name="Perschil I."/>
            <person name="Chacinska A."/>
            <person name="Guiard B."/>
            <person name="Rehling P."/>
            <person name="Pfanner N."/>
            <person name="Meisinger C."/>
        </authorList>
    </citation>
    <scope>SUBCELLULAR LOCATION [LARGE SCALE ANALYSIS]</scope>
    <source>
        <strain>ATCC 76625 / YPH499</strain>
    </source>
</reference>
<reference key="11">
    <citation type="journal article" date="2015" name="Nat. Commun.">
        <title>Organization of the mitochondrial translation machinery studied in situ by cryoelectron tomography.</title>
        <authorList>
            <person name="Pfeffer S."/>
            <person name="Woellhaf M.W."/>
            <person name="Herrmann J.M."/>
            <person name="Forster F."/>
        </authorList>
    </citation>
    <scope>SUBCELLULAR LOCATION</scope>
</reference>
<reference key="12">
    <citation type="journal article" date="2017" name="Science">
        <title>The structure of the yeast mitochondrial ribosome.</title>
        <authorList>
            <person name="Desai N."/>
            <person name="Brown A."/>
            <person name="Amunts A."/>
            <person name="Ramakrishnan V."/>
        </authorList>
    </citation>
    <scope>STRUCTURE BY ELECTRON MICROSCOPY (3.25 ANGSTROMS)</scope>
    <scope>SUBUNIT</scope>
</reference>
<comment type="function">
    <text evidence="10 11">Component of the mitochondrial ribosome (mitoribosome), a dedicated translation machinery responsible for the synthesis of mitochondrial genome-encoded proteins, including at least some of the essential transmembrane subunits of the mitochondrial respiratory chain. The mitoribosomes are attached to the mitochondrial inner membrane and translation products are cotranslationally integrated into the membrane.</text>
</comment>
<comment type="subunit">
    <text evidence="1 6 7">Component of the mitochondrial small ribosomal subunit (mt-SSU). Mature yeast 74S mitochondrial ribosomes consist of a small (37S) and a large (54S) subunit. The 37S small subunit contains a 15S ribosomal RNA (15S mt-rRNA) and 34 different proteins. The 54S large subunit contains a 21S rRNA (21S mt-rRNA) and 46 different proteins.</text>
</comment>
<comment type="subcellular location">
    <subcellularLocation>
        <location evidence="2 4">Mitochondrion</location>
    </subcellularLocation>
    <text evidence="5">Mitoribosomes are tethered to the mitochondrial inner membrane and spatially aligned with the membrane insertion machinery through two distinct membrane contact sites, formed by the 21S rRNA expansion segment 96-ES1 and the inner membrane protein MBA1.</text>
</comment>
<comment type="miscellaneous">
    <text evidence="3">Present with 5300 molecules/cell in log phase SD medium.</text>
</comment>
<comment type="similarity">
    <text evidence="9">Belongs to the universal ribosomal protein uS11 family.</text>
</comment>
<accession>P42847</accession>
<accession>D6W0N9</accession>
<sequence length="217" mass="24563">MLLQPVWKGCRWTQFVRPIRRWNSTGTNRGVPFSFKDISNQEDITNISYPSSSDSVLTKSNGSSEVYKPKEEVVKYILHGKFTKNNTHLTFSSVVEDKNFHKNKGLTYNDTMLYYLNLPQKVKISLSTGCLGFRKAARGEYEAAFQTSGRMFELIKEKNMLNKDIEVVMDDFGKGRAAFISALVGKEGASVVKKVVKISDATKLKFGGVRSPKMRRL</sequence>
<gene>
    <name type="primary">MRPS18</name>
    <name type="ordered locus">YNL306W</name>
    <name type="ORF">N0397</name>
</gene>
<proteinExistence type="evidence at protein level"/>
<keyword id="KW-0002">3D-structure</keyword>
<keyword id="KW-0903">Direct protein sequencing</keyword>
<keyword id="KW-0496">Mitochondrion</keyword>
<keyword id="KW-1185">Reference proteome</keyword>
<keyword id="KW-0687">Ribonucleoprotein</keyword>
<keyword id="KW-0689">Ribosomal protein</keyword>
<keyword id="KW-0809">Transit peptide</keyword>
<protein>
    <recommendedName>
        <fullName evidence="8">Small ribosomal subunit protein uS11m</fullName>
    </recommendedName>
    <alternativeName>
        <fullName>37S ribosomal protein S18, mitochondrial</fullName>
    </alternativeName>
    <alternativeName>
        <fullName>YmS18</fullName>
    </alternativeName>
</protein>
<feature type="transit peptide" description="Mitochondrion" evidence="7">
    <location>
        <begin position="1"/>
        <end position="59"/>
    </location>
</feature>
<feature type="chain" id="PRO_0000030586" description="Small ribosomal subunit protein uS11m">
    <location>
        <begin position="60"/>
        <end position="217"/>
    </location>
</feature>
<feature type="strand" evidence="12">
    <location>
        <begin position="72"/>
        <end position="82"/>
    </location>
</feature>
<feature type="strand" evidence="12">
    <location>
        <begin position="87"/>
        <end position="96"/>
    </location>
</feature>
<feature type="helix" evidence="12">
    <location>
        <begin position="108"/>
        <end position="116"/>
    </location>
</feature>
<feature type="strand" evidence="12">
    <location>
        <begin position="121"/>
        <end position="127"/>
    </location>
</feature>
<feature type="turn" evidence="12">
    <location>
        <begin position="128"/>
        <end position="132"/>
    </location>
</feature>
<feature type="helix" evidence="12">
    <location>
        <begin position="135"/>
        <end position="139"/>
    </location>
</feature>
<feature type="helix" evidence="12">
    <location>
        <begin position="141"/>
        <end position="157"/>
    </location>
</feature>
<feature type="strand" evidence="12">
    <location>
        <begin position="165"/>
        <end position="169"/>
    </location>
</feature>
<feature type="helix" evidence="12">
    <location>
        <begin position="176"/>
        <end position="184"/>
    </location>
</feature>
<feature type="helix" evidence="12">
    <location>
        <begin position="189"/>
        <end position="192"/>
    </location>
</feature>
<feature type="strand" evidence="12">
    <location>
        <begin position="195"/>
        <end position="200"/>
    </location>
</feature>
<organism>
    <name type="scientific">Saccharomyces cerevisiae (strain ATCC 204508 / S288c)</name>
    <name type="common">Baker's yeast</name>
    <dbReference type="NCBI Taxonomy" id="559292"/>
    <lineage>
        <taxon>Eukaryota</taxon>
        <taxon>Fungi</taxon>
        <taxon>Dikarya</taxon>
        <taxon>Ascomycota</taxon>
        <taxon>Saccharomycotina</taxon>
        <taxon>Saccharomycetes</taxon>
        <taxon>Saccharomycetales</taxon>
        <taxon>Saccharomycetaceae</taxon>
        <taxon>Saccharomyces</taxon>
    </lineage>
</organism>
<dbReference type="EMBL" id="U23084">
    <property type="protein sequence ID" value="AAC49092.1"/>
    <property type="molecule type" value="Genomic_DNA"/>
</dbReference>
<dbReference type="EMBL" id="Z71582">
    <property type="protein sequence ID" value="CAA96234.1"/>
    <property type="molecule type" value="Genomic_DNA"/>
</dbReference>
<dbReference type="EMBL" id="Z46259">
    <property type="protein sequence ID" value="CAA86389.1"/>
    <property type="molecule type" value="Genomic_DNA"/>
</dbReference>
<dbReference type="EMBL" id="AY558132">
    <property type="protein sequence ID" value="AAS56458.1"/>
    <property type="molecule type" value="Genomic_DNA"/>
</dbReference>
<dbReference type="EMBL" id="BK006947">
    <property type="protein sequence ID" value="DAA10255.1"/>
    <property type="molecule type" value="Genomic_DNA"/>
</dbReference>
<dbReference type="PIR" id="S60394">
    <property type="entry name" value="S60394"/>
</dbReference>
<dbReference type="RefSeq" id="NP_014093.1">
    <property type="nucleotide sequence ID" value="NM_001183144.1"/>
</dbReference>
<dbReference type="PDB" id="5MRC">
    <property type="method" value="EM"/>
    <property type="resolution" value="3.25 A"/>
    <property type="chains" value="KK=70-217"/>
</dbReference>
<dbReference type="PDB" id="5MRE">
    <property type="method" value="EM"/>
    <property type="resolution" value="3.75 A"/>
    <property type="chains" value="KK=70-217"/>
</dbReference>
<dbReference type="PDB" id="5MRF">
    <property type="method" value="EM"/>
    <property type="resolution" value="4.97 A"/>
    <property type="chains" value="KK=70-217"/>
</dbReference>
<dbReference type="PDB" id="8D8K">
    <property type="method" value="EM"/>
    <property type="resolution" value="3.13 A"/>
    <property type="chains" value="K=1-217"/>
</dbReference>
<dbReference type="PDB" id="8D8L">
    <property type="method" value="EM"/>
    <property type="resolution" value="2.60 A"/>
    <property type="chains" value="K=1-217"/>
</dbReference>
<dbReference type="PDB" id="8OM2">
    <property type="method" value="EM"/>
    <property type="resolution" value="2.57 A"/>
    <property type="chains" value="K=1-217"/>
</dbReference>
<dbReference type="PDB" id="8OM3">
    <property type="method" value="EM"/>
    <property type="resolution" value="2.87 A"/>
    <property type="chains" value="K=1-217"/>
</dbReference>
<dbReference type="PDB" id="8OM4">
    <property type="method" value="EM"/>
    <property type="resolution" value="2.32 A"/>
    <property type="chains" value="K=1-217"/>
</dbReference>
<dbReference type="PDBsum" id="5MRC"/>
<dbReference type="PDBsum" id="5MRE"/>
<dbReference type="PDBsum" id="5MRF"/>
<dbReference type="PDBsum" id="8D8K"/>
<dbReference type="PDBsum" id="8D8L"/>
<dbReference type="PDBsum" id="8OM2"/>
<dbReference type="PDBsum" id="8OM3"/>
<dbReference type="PDBsum" id="8OM4"/>
<dbReference type="EMDB" id="EMD-16966"/>
<dbReference type="EMDB" id="EMD-16967"/>
<dbReference type="EMDB" id="EMD-16968"/>
<dbReference type="EMDB" id="EMD-27250"/>
<dbReference type="EMDB" id="EMD-27251"/>
<dbReference type="EMDB" id="EMD-3551"/>
<dbReference type="EMDB" id="EMD-3552"/>
<dbReference type="EMDB" id="EMD-3553"/>
<dbReference type="SMR" id="P42847"/>
<dbReference type="BioGRID" id="35533">
    <property type="interactions" value="90"/>
</dbReference>
<dbReference type="ComplexPortal" id="CPX-1603">
    <property type="entry name" value="37S mitochondrial small ribosomal subunit"/>
</dbReference>
<dbReference type="DIP" id="DIP-6794N"/>
<dbReference type="FunCoup" id="P42847">
    <property type="interactions" value="317"/>
</dbReference>
<dbReference type="IntAct" id="P42847">
    <property type="interactions" value="41"/>
</dbReference>
<dbReference type="MINT" id="P42847"/>
<dbReference type="STRING" id="4932.YNL306W"/>
<dbReference type="iPTMnet" id="P42847"/>
<dbReference type="PaxDb" id="4932-YNL306W"/>
<dbReference type="PeptideAtlas" id="P42847"/>
<dbReference type="EnsemblFungi" id="YNL306W_mRNA">
    <property type="protein sequence ID" value="YNL306W"/>
    <property type="gene ID" value="YNL306W"/>
</dbReference>
<dbReference type="GeneID" id="855410"/>
<dbReference type="KEGG" id="sce:YNL306W"/>
<dbReference type="AGR" id="SGD:S000005250"/>
<dbReference type="SGD" id="S000005250">
    <property type="gene designation" value="MRPS18"/>
</dbReference>
<dbReference type="VEuPathDB" id="FungiDB:YNL306W"/>
<dbReference type="eggNOG" id="ENOG502S752">
    <property type="taxonomic scope" value="Eukaryota"/>
</dbReference>
<dbReference type="HOGENOM" id="CLU_072439_4_0_1"/>
<dbReference type="InParanoid" id="P42847"/>
<dbReference type="OMA" id="FHRHNTL"/>
<dbReference type="OrthoDB" id="1654884at2759"/>
<dbReference type="BioCyc" id="YEAST:G3O-33293-MONOMER"/>
<dbReference type="BioGRID-ORCS" id="855410">
    <property type="hits" value="0 hits in 10 CRISPR screens"/>
</dbReference>
<dbReference type="PRO" id="PR:P42847"/>
<dbReference type="Proteomes" id="UP000002311">
    <property type="component" value="Chromosome XIV"/>
</dbReference>
<dbReference type="RNAct" id="P42847">
    <property type="molecule type" value="protein"/>
</dbReference>
<dbReference type="GO" id="GO:0005743">
    <property type="term" value="C:mitochondrial inner membrane"/>
    <property type="evidence" value="ECO:0000303"/>
    <property type="project" value="ComplexPortal"/>
</dbReference>
<dbReference type="GO" id="GO:0005763">
    <property type="term" value="C:mitochondrial small ribosomal subunit"/>
    <property type="evidence" value="ECO:0000314"/>
    <property type="project" value="SGD"/>
</dbReference>
<dbReference type="GO" id="GO:0005739">
    <property type="term" value="C:mitochondrion"/>
    <property type="evidence" value="ECO:0007005"/>
    <property type="project" value="SGD"/>
</dbReference>
<dbReference type="GO" id="GO:0003735">
    <property type="term" value="F:structural constituent of ribosome"/>
    <property type="evidence" value="ECO:0000314"/>
    <property type="project" value="SGD"/>
</dbReference>
<dbReference type="GO" id="GO:0032543">
    <property type="term" value="P:mitochondrial translation"/>
    <property type="evidence" value="ECO:0000303"/>
    <property type="project" value="ComplexPortal"/>
</dbReference>
<dbReference type="GO" id="GO:0006412">
    <property type="term" value="P:translation"/>
    <property type="evidence" value="ECO:0000318"/>
    <property type="project" value="GO_Central"/>
</dbReference>
<dbReference type="FunFam" id="3.30.420.80:FF:000011">
    <property type="entry name" value="37S ribosomal protein S18, mitochondrial"/>
    <property type="match status" value="1"/>
</dbReference>
<dbReference type="Gene3D" id="3.30.420.80">
    <property type="entry name" value="Ribosomal protein S11"/>
    <property type="match status" value="1"/>
</dbReference>
<dbReference type="HAMAP" id="MF_01310">
    <property type="entry name" value="Ribosomal_uS11"/>
    <property type="match status" value="1"/>
</dbReference>
<dbReference type="InterPro" id="IPR001971">
    <property type="entry name" value="Ribosomal_uS11"/>
</dbReference>
<dbReference type="InterPro" id="IPR036967">
    <property type="entry name" value="Ribosomal_uS11_sf"/>
</dbReference>
<dbReference type="PANTHER" id="PTHR11759">
    <property type="entry name" value="40S RIBOSOMAL PROTEIN S14/30S RIBOSOMAL PROTEIN S11"/>
    <property type="match status" value="1"/>
</dbReference>
<dbReference type="SUPFAM" id="SSF53137">
    <property type="entry name" value="Translational machinery components"/>
    <property type="match status" value="1"/>
</dbReference>